<feature type="chain" id="PRO_0000289009" description="Peroxide-responsive repressor PerR">
    <location>
        <begin position="1"/>
        <end position="148"/>
    </location>
</feature>
<feature type="region of interest" description="DNA-binding" evidence="1">
    <location>
        <begin position="1"/>
        <end position="84"/>
    </location>
</feature>
<feature type="binding site" evidence="1">
    <location>
        <position position="102"/>
    </location>
    <ligand>
        <name>Zn(2+)</name>
        <dbReference type="ChEBI" id="CHEBI:29105"/>
    </ligand>
</feature>
<feature type="binding site" evidence="1">
    <location>
        <position position="105"/>
    </location>
    <ligand>
        <name>Zn(2+)</name>
        <dbReference type="ChEBI" id="CHEBI:29105"/>
    </ligand>
</feature>
<feature type="binding site" evidence="1">
    <location>
        <position position="142"/>
    </location>
    <ligand>
        <name>Zn(2+)</name>
        <dbReference type="ChEBI" id="CHEBI:29105"/>
    </ligand>
</feature>
<feature type="binding site" evidence="1">
    <location>
        <position position="145"/>
    </location>
    <ligand>
        <name>Zn(2+)</name>
        <dbReference type="ChEBI" id="CHEBI:29105"/>
    </ligand>
</feature>
<organism>
    <name type="scientific">Staphylococcus aureus</name>
    <dbReference type="NCBI Taxonomy" id="1280"/>
    <lineage>
        <taxon>Bacteria</taxon>
        <taxon>Bacillati</taxon>
        <taxon>Bacillota</taxon>
        <taxon>Bacilli</taxon>
        <taxon>Bacillales</taxon>
        <taxon>Staphylococcaceae</taxon>
        <taxon>Staphylococcus</taxon>
    </lineage>
</organism>
<keyword id="KW-0963">Cytoplasm</keyword>
<keyword id="KW-0238">DNA-binding</keyword>
<keyword id="KW-0464">Manganese</keyword>
<keyword id="KW-0479">Metal-binding</keyword>
<keyword id="KW-0678">Repressor</keyword>
<keyword id="KW-0804">Transcription</keyword>
<keyword id="KW-0805">Transcription regulation</keyword>
<keyword id="KW-0862">Zinc</keyword>
<accession>Q9RQL3</accession>
<proteinExistence type="inferred from homology"/>
<gene>
    <name type="primary">perR</name>
</gene>
<reference key="1">
    <citation type="submission" date="1998-09" db="EMBL/GenBank/DDBJ databases">
        <title>Three fur homologs of Staphylococcus aureus.</title>
        <authorList>
            <person name="Choi G.H."/>
            <person name="Tran M."/>
        </authorList>
    </citation>
    <scope>NUCLEOTIDE SEQUENCE [GENOMIC DNA]</scope>
    <source>
        <strain>ISP3</strain>
    </source>
</reference>
<evidence type="ECO:0000250" key="1"/>
<evidence type="ECO:0000305" key="2"/>
<name>PERR_STAAU</name>
<sequence length="148" mass="17183">MSVEIESIEHELEESIASLRQAGVRITPQRQAILRYLISSHTHPTADEIYQALSPDFPNISVATIYNNLRVFKDIGIVKELTYGDSSSRFDFNTHNHYHIICEQCGKIVDFQYPQLNEIERLAQHMTDFDVTHHRMEIYGVCKECQDK</sequence>
<protein>
    <recommendedName>
        <fullName>Peroxide-responsive repressor PerR</fullName>
    </recommendedName>
</protein>
<comment type="function">
    <text evidence="1">Manganese-dependent repressor that controls a regulon of oxidative stress resistance and iron-storage proteins. May act as a hydrogen peroxide and organic hydroperoxide sensor (By similarity).</text>
</comment>
<comment type="subcellular location">
    <subcellularLocation>
        <location evidence="1">Cytoplasm</location>
    </subcellularLocation>
</comment>
<comment type="similarity">
    <text evidence="2">Belongs to the Fur family.</text>
</comment>
<dbReference type="EMBL" id="AF095596">
    <property type="protein sequence ID" value="AAF00079.1"/>
    <property type="molecule type" value="Genomic_DNA"/>
</dbReference>
<dbReference type="RefSeq" id="WP_000110011.1">
    <property type="nucleotide sequence ID" value="NZ_WWFR01000006.1"/>
</dbReference>
<dbReference type="SMR" id="Q9RQL3"/>
<dbReference type="GeneID" id="98346243"/>
<dbReference type="OMA" id="HDHVILT"/>
<dbReference type="OrthoDB" id="8659436at2"/>
<dbReference type="GO" id="GO:0005737">
    <property type="term" value="C:cytoplasm"/>
    <property type="evidence" value="ECO:0007669"/>
    <property type="project" value="UniProtKB-SubCell"/>
</dbReference>
<dbReference type="GO" id="GO:0003700">
    <property type="term" value="F:DNA-binding transcription factor activity"/>
    <property type="evidence" value="ECO:0007669"/>
    <property type="project" value="InterPro"/>
</dbReference>
<dbReference type="GO" id="GO:0000976">
    <property type="term" value="F:transcription cis-regulatory region binding"/>
    <property type="evidence" value="ECO:0007669"/>
    <property type="project" value="TreeGrafter"/>
</dbReference>
<dbReference type="GO" id="GO:0008270">
    <property type="term" value="F:zinc ion binding"/>
    <property type="evidence" value="ECO:0007669"/>
    <property type="project" value="TreeGrafter"/>
</dbReference>
<dbReference type="GO" id="GO:0045892">
    <property type="term" value="P:negative regulation of DNA-templated transcription"/>
    <property type="evidence" value="ECO:0007669"/>
    <property type="project" value="TreeGrafter"/>
</dbReference>
<dbReference type="GO" id="GO:1900376">
    <property type="term" value="P:regulation of secondary metabolite biosynthetic process"/>
    <property type="evidence" value="ECO:0007669"/>
    <property type="project" value="TreeGrafter"/>
</dbReference>
<dbReference type="CDD" id="cd07153">
    <property type="entry name" value="Fur_like"/>
    <property type="match status" value="1"/>
</dbReference>
<dbReference type="FunFam" id="1.10.10.10:FF:000147">
    <property type="entry name" value="Fur family transcriptional regulator"/>
    <property type="match status" value="1"/>
</dbReference>
<dbReference type="FunFam" id="3.30.1490.190:FF:000003">
    <property type="entry name" value="Fur family transcriptional regulator"/>
    <property type="match status" value="1"/>
</dbReference>
<dbReference type="Gene3D" id="3.30.1490.190">
    <property type="match status" value="1"/>
</dbReference>
<dbReference type="Gene3D" id="1.10.10.10">
    <property type="entry name" value="Winged helix-like DNA-binding domain superfamily/Winged helix DNA-binding domain"/>
    <property type="match status" value="1"/>
</dbReference>
<dbReference type="InterPro" id="IPR002481">
    <property type="entry name" value="FUR"/>
</dbReference>
<dbReference type="InterPro" id="IPR043135">
    <property type="entry name" value="Fur_C"/>
</dbReference>
<dbReference type="InterPro" id="IPR036388">
    <property type="entry name" value="WH-like_DNA-bd_sf"/>
</dbReference>
<dbReference type="InterPro" id="IPR036390">
    <property type="entry name" value="WH_DNA-bd_sf"/>
</dbReference>
<dbReference type="PANTHER" id="PTHR33202:SF8">
    <property type="entry name" value="PEROXIDE-RESPONSIVE REPRESSOR PERR"/>
    <property type="match status" value="1"/>
</dbReference>
<dbReference type="PANTHER" id="PTHR33202">
    <property type="entry name" value="ZINC UPTAKE REGULATION PROTEIN"/>
    <property type="match status" value="1"/>
</dbReference>
<dbReference type="Pfam" id="PF01475">
    <property type="entry name" value="FUR"/>
    <property type="match status" value="1"/>
</dbReference>
<dbReference type="SUPFAM" id="SSF46785">
    <property type="entry name" value="Winged helix' DNA-binding domain"/>
    <property type="match status" value="1"/>
</dbReference>